<dbReference type="EC" id="3.6.4.13"/>
<dbReference type="EMBL" id="BA000051">
    <property type="protein sequence ID" value="BAE59165.1"/>
    <property type="molecule type" value="Genomic_DNA"/>
</dbReference>
<dbReference type="RefSeq" id="XP_001821167.1">
    <property type="nucleotide sequence ID" value="XM_001821115.2"/>
</dbReference>
<dbReference type="SMR" id="Q2UH00"/>
<dbReference type="STRING" id="510516.Q2UH00"/>
<dbReference type="EnsemblFungi" id="BAE59165">
    <property type="protein sequence ID" value="BAE59165"/>
    <property type="gene ID" value="AO090023000644"/>
</dbReference>
<dbReference type="GeneID" id="5993169"/>
<dbReference type="KEGG" id="aor:AO090023000644"/>
<dbReference type="VEuPathDB" id="FungiDB:AO090023000644"/>
<dbReference type="HOGENOM" id="CLU_003041_11_3_1"/>
<dbReference type="OMA" id="ARDIKHM"/>
<dbReference type="OrthoDB" id="95036at5052"/>
<dbReference type="Proteomes" id="UP000006564">
    <property type="component" value="Chromosome 3"/>
</dbReference>
<dbReference type="GO" id="GO:0005737">
    <property type="term" value="C:cytoplasm"/>
    <property type="evidence" value="ECO:0007669"/>
    <property type="project" value="UniProtKB-SubCell"/>
</dbReference>
<dbReference type="GO" id="GO:0005634">
    <property type="term" value="C:nucleus"/>
    <property type="evidence" value="ECO:0007669"/>
    <property type="project" value="UniProtKB-SubCell"/>
</dbReference>
<dbReference type="GO" id="GO:0005524">
    <property type="term" value="F:ATP binding"/>
    <property type="evidence" value="ECO:0007669"/>
    <property type="project" value="UniProtKB-KW"/>
</dbReference>
<dbReference type="GO" id="GO:0016887">
    <property type="term" value="F:ATP hydrolysis activity"/>
    <property type="evidence" value="ECO:0007669"/>
    <property type="project" value="RHEA"/>
</dbReference>
<dbReference type="GO" id="GO:0003676">
    <property type="term" value="F:nucleic acid binding"/>
    <property type="evidence" value="ECO:0007669"/>
    <property type="project" value="InterPro"/>
</dbReference>
<dbReference type="GO" id="GO:0003724">
    <property type="term" value="F:RNA helicase activity"/>
    <property type="evidence" value="ECO:0007669"/>
    <property type="project" value="UniProtKB-EC"/>
</dbReference>
<dbReference type="GO" id="GO:0006397">
    <property type="term" value="P:mRNA processing"/>
    <property type="evidence" value="ECO:0007669"/>
    <property type="project" value="UniProtKB-KW"/>
</dbReference>
<dbReference type="GO" id="GO:0008380">
    <property type="term" value="P:RNA splicing"/>
    <property type="evidence" value="ECO:0007669"/>
    <property type="project" value="UniProtKB-KW"/>
</dbReference>
<dbReference type="CDD" id="cd17945">
    <property type="entry name" value="DEADc_DDX23"/>
    <property type="match status" value="1"/>
</dbReference>
<dbReference type="CDD" id="cd18787">
    <property type="entry name" value="SF2_C_DEAD"/>
    <property type="match status" value="1"/>
</dbReference>
<dbReference type="FunFam" id="3.40.50.300:FF:000322">
    <property type="entry name" value="probable ATP-dependent RNA helicase DDX23"/>
    <property type="match status" value="1"/>
</dbReference>
<dbReference type="Gene3D" id="3.40.50.300">
    <property type="entry name" value="P-loop containing nucleotide triphosphate hydrolases"/>
    <property type="match status" value="2"/>
</dbReference>
<dbReference type="InterPro" id="IPR011545">
    <property type="entry name" value="DEAD/DEAH_box_helicase_dom"/>
</dbReference>
<dbReference type="InterPro" id="IPR014001">
    <property type="entry name" value="Helicase_ATP-bd"/>
</dbReference>
<dbReference type="InterPro" id="IPR001650">
    <property type="entry name" value="Helicase_C-like"/>
</dbReference>
<dbReference type="InterPro" id="IPR027417">
    <property type="entry name" value="P-loop_NTPase"/>
</dbReference>
<dbReference type="InterPro" id="IPR000629">
    <property type="entry name" value="RNA-helicase_DEAD-box_CS"/>
</dbReference>
<dbReference type="InterPro" id="IPR014014">
    <property type="entry name" value="RNA_helicase_DEAD_Q_motif"/>
</dbReference>
<dbReference type="PANTHER" id="PTHR47958">
    <property type="entry name" value="ATP-DEPENDENT RNA HELICASE DBP3"/>
    <property type="match status" value="1"/>
</dbReference>
<dbReference type="Pfam" id="PF25430">
    <property type="entry name" value="DDX23"/>
    <property type="match status" value="1"/>
</dbReference>
<dbReference type="Pfam" id="PF00270">
    <property type="entry name" value="DEAD"/>
    <property type="match status" value="1"/>
</dbReference>
<dbReference type="Pfam" id="PF00271">
    <property type="entry name" value="Helicase_C"/>
    <property type="match status" value="1"/>
</dbReference>
<dbReference type="SMART" id="SM00487">
    <property type="entry name" value="DEXDc"/>
    <property type="match status" value="1"/>
</dbReference>
<dbReference type="SMART" id="SM00490">
    <property type="entry name" value="HELICc"/>
    <property type="match status" value="1"/>
</dbReference>
<dbReference type="SUPFAM" id="SSF52540">
    <property type="entry name" value="P-loop containing nucleoside triphosphate hydrolases"/>
    <property type="match status" value="1"/>
</dbReference>
<dbReference type="PROSITE" id="PS00039">
    <property type="entry name" value="DEAD_ATP_HELICASE"/>
    <property type="match status" value="1"/>
</dbReference>
<dbReference type="PROSITE" id="PS51192">
    <property type="entry name" value="HELICASE_ATP_BIND_1"/>
    <property type="match status" value="1"/>
</dbReference>
<dbReference type="PROSITE" id="PS51194">
    <property type="entry name" value="HELICASE_CTER"/>
    <property type="match status" value="1"/>
</dbReference>
<dbReference type="PROSITE" id="PS51195">
    <property type="entry name" value="Q_MOTIF"/>
    <property type="match status" value="1"/>
</dbReference>
<organism>
    <name type="scientific">Aspergillus oryzae (strain ATCC 42149 / RIB 40)</name>
    <name type="common">Yellow koji mold</name>
    <dbReference type="NCBI Taxonomy" id="510516"/>
    <lineage>
        <taxon>Eukaryota</taxon>
        <taxon>Fungi</taxon>
        <taxon>Dikarya</taxon>
        <taxon>Ascomycota</taxon>
        <taxon>Pezizomycotina</taxon>
        <taxon>Eurotiomycetes</taxon>
        <taxon>Eurotiomycetidae</taxon>
        <taxon>Eurotiales</taxon>
        <taxon>Aspergillaceae</taxon>
        <taxon>Aspergillus</taxon>
        <taxon>Aspergillus subgen. Circumdati</taxon>
    </lineage>
</organism>
<feature type="chain" id="PRO_0000232370" description="Pre-mRNA-splicing ATP-dependent RNA helicase prp28">
    <location>
        <begin position="1"/>
        <end position="803"/>
    </location>
</feature>
<feature type="domain" description="Helicase ATP-binding" evidence="2">
    <location>
        <begin position="398"/>
        <end position="603"/>
    </location>
</feature>
<feature type="domain" description="Helicase C-terminal" evidence="3">
    <location>
        <begin position="614"/>
        <end position="777"/>
    </location>
</feature>
<feature type="region of interest" description="Disordered" evidence="4">
    <location>
        <begin position="1"/>
        <end position="83"/>
    </location>
</feature>
<feature type="region of interest" description="Disordered" evidence="4">
    <location>
        <begin position="115"/>
        <end position="210"/>
    </location>
</feature>
<feature type="region of interest" description="Disordered" evidence="4">
    <location>
        <begin position="773"/>
        <end position="803"/>
    </location>
</feature>
<feature type="short sequence motif" description="Q motif">
    <location>
        <begin position="367"/>
        <end position="395"/>
    </location>
</feature>
<feature type="short sequence motif" description="DEAD box">
    <location>
        <begin position="526"/>
        <end position="529"/>
    </location>
</feature>
<feature type="compositionally biased region" description="Pro residues" evidence="4">
    <location>
        <begin position="11"/>
        <end position="62"/>
    </location>
</feature>
<feature type="compositionally biased region" description="Basic and acidic residues" evidence="4">
    <location>
        <begin position="115"/>
        <end position="126"/>
    </location>
</feature>
<feature type="compositionally biased region" description="Polar residues" evidence="4">
    <location>
        <begin position="135"/>
        <end position="146"/>
    </location>
</feature>
<feature type="binding site" evidence="2">
    <location>
        <begin position="411"/>
        <end position="418"/>
    </location>
    <ligand>
        <name>ATP</name>
        <dbReference type="ChEBI" id="CHEBI:30616"/>
    </ligand>
</feature>
<name>PRP28_ASPOR</name>
<protein>
    <recommendedName>
        <fullName>Pre-mRNA-splicing ATP-dependent RNA helicase prp28</fullName>
        <ecNumber>3.6.4.13</ecNumber>
    </recommendedName>
</protein>
<reference key="1">
    <citation type="journal article" date="2005" name="Nature">
        <title>Genome sequencing and analysis of Aspergillus oryzae.</title>
        <authorList>
            <person name="Machida M."/>
            <person name="Asai K."/>
            <person name="Sano M."/>
            <person name="Tanaka T."/>
            <person name="Kumagai T."/>
            <person name="Terai G."/>
            <person name="Kusumoto K."/>
            <person name="Arima T."/>
            <person name="Akita O."/>
            <person name="Kashiwagi Y."/>
            <person name="Abe K."/>
            <person name="Gomi K."/>
            <person name="Horiuchi H."/>
            <person name="Kitamoto K."/>
            <person name="Kobayashi T."/>
            <person name="Takeuchi M."/>
            <person name="Denning D.W."/>
            <person name="Galagan J.E."/>
            <person name="Nierman W.C."/>
            <person name="Yu J."/>
            <person name="Archer D.B."/>
            <person name="Bennett J.W."/>
            <person name="Bhatnagar D."/>
            <person name="Cleveland T.E."/>
            <person name="Fedorova N.D."/>
            <person name="Gotoh O."/>
            <person name="Horikawa H."/>
            <person name="Hosoyama A."/>
            <person name="Ichinomiya M."/>
            <person name="Igarashi R."/>
            <person name="Iwashita K."/>
            <person name="Juvvadi P.R."/>
            <person name="Kato M."/>
            <person name="Kato Y."/>
            <person name="Kin T."/>
            <person name="Kokubun A."/>
            <person name="Maeda H."/>
            <person name="Maeyama N."/>
            <person name="Maruyama J."/>
            <person name="Nagasaki H."/>
            <person name="Nakajima T."/>
            <person name="Oda K."/>
            <person name="Okada K."/>
            <person name="Paulsen I."/>
            <person name="Sakamoto K."/>
            <person name="Sawano T."/>
            <person name="Takahashi M."/>
            <person name="Takase K."/>
            <person name="Terabayashi Y."/>
            <person name="Wortman J.R."/>
            <person name="Yamada O."/>
            <person name="Yamagata Y."/>
            <person name="Anazawa H."/>
            <person name="Hata Y."/>
            <person name="Koide Y."/>
            <person name="Komori T."/>
            <person name="Koyama Y."/>
            <person name="Minetoki T."/>
            <person name="Suharnan S."/>
            <person name="Tanaka A."/>
            <person name="Isono K."/>
            <person name="Kuhara S."/>
            <person name="Ogasawara N."/>
            <person name="Kikuchi H."/>
        </authorList>
    </citation>
    <scope>NUCLEOTIDE SEQUENCE [LARGE SCALE GENOMIC DNA]</scope>
    <source>
        <strain>ATCC 42149 / RIB 40</strain>
    </source>
</reference>
<accession>Q2UH00</accession>
<keyword id="KW-0067">ATP-binding</keyword>
<keyword id="KW-0963">Cytoplasm</keyword>
<keyword id="KW-0347">Helicase</keyword>
<keyword id="KW-0378">Hydrolase</keyword>
<keyword id="KW-0507">mRNA processing</keyword>
<keyword id="KW-0508">mRNA splicing</keyword>
<keyword id="KW-0547">Nucleotide-binding</keyword>
<keyword id="KW-0539">Nucleus</keyword>
<keyword id="KW-1185">Reference proteome</keyword>
<sequence>MDDIVMNGSPEVPPPQPPPEPVERPPTPPPPPPEESVAPPPPPEVVAPPPPPEDLPPAPPPPEPKKKKVGWGAKKPAATPLSVEELVRKKREADAAAARPKFLSRAERERIALEKRAKEVEAERRLKASNGVDRSATQSPSVSSEVNHSDGRTIPTGPRAMRSSDTPTAPAAMRNSHSHNKNRDLSPPPPPKSMSFGLASSKGDKRPVDDDEVAAQVALVKQRYMGADQTSTFSAKKKRKRTTDRKFNFEWNAEEDTSGDYNPLYQHRHEANFFGRGRLAGFGDDVADNVAKKYARALEDRDHEAGGIRAREILEMERRRREESTRNQLDKHWSEKKLEHMRERDWRIFKEDFNISTKGGSVPNPMRSWDESGLPKRLMELVNKVGYKEPTPIQRAAIPIAMQSRDLIGVAVTGSGKTASFLLPLLVYIAELPRIDEFEWRKNDGPYAIVLAPTRELAQQIEIEAKKFTEPLGFNVVSIVGGHSFEEQAYSLRNGAEIIIATPGRLVDCIERRMLVLSQCCYVIMDEADRMIDLGFEEPVNKILDALPVSNEKPDSEEAENSMAMSQHIGTKDRYRQTMMYTATMPTAVERIARKYLRRPAIVTIGSAGEAVDTVEQRVEFIAGEDKRKKRLGDILSSGEFRPPIIVFVNIKRNCDAIAREIKQWGFSSVTLHGSKTQEQREAALASVRNGQTDVLVATDLAGRGIDVPDVSLVINFNMATTIESYTHRIGRTGRAGKSGVAITFLGNEDTDVMYDLKQMIMKSSISRLPEELRKHEAAQSKPTRGFAKKNDDNSAFGSKGGW</sequence>
<proteinExistence type="inferred from homology"/>
<evidence type="ECO:0000250" key="1"/>
<evidence type="ECO:0000255" key="2">
    <source>
        <dbReference type="PROSITE-ProRule" id="PRU00541"/>
    </source>
</evidence>
<evidence type="ECO:0000255" key="3">
    <source>
        <dbReference type="PROSITE-ProRule" id="PRU00542"/>
    </source>
</evidence>
<evidence type="ECO:0000256" key="4">
    <source>
        <dbReference type="SAM" id="MobiDB-lite"/>
    </source>
</evidence>
<evidence type="ECO:0000305" key="5"/>
<comment type="function">
    <text evidence="1">ATP-dependent RNA helicase involved in mRNA splicing. May destabilize the U1/5'-splice site duplex to permit an effective competition for the 5'-splice site by the U6 snRNA, resulting in the switch between U1 and U6 at the 5'-splice site. May also act to unwind the U4/U6 base-pairing interaction in the U4/U6/U5 snRNP, facilitating the first covalent step of splicing (By similarity).</text>
</comment>
<comment type="catalytic activity">
    <reaction>
        <text>ATP + H2O = ADP + phosphate + H(+)</text>
        <dbReference type="Rhea" id="RHEA:13065"/>
        <dbReference type="ChEBI" id="CHEBI:15377"/>
        <dbReference type="ChEBI" id="CHEBI:15378"/>
        <dbReference type="ChEBI" id="CHEBI:30616"/>
        <dbReference type="ChEBI" id="CHEBI:43474"/>
        <dbReference type="ChEBI" id="CHEBI:456216"/>
        <dbReference type="EC" id="3.6.4.13"/>
    </reaction>
</comment>
<comment type="subunit">
    <text evidence="1">Component of the U5 snRNP complex.</text>
</comment>
<comment type="subcellular location">
    <subcellularLocation>
        <location evidence="1">Cytoplasm</location>
    </subcellularLocation>
    <subcellularLocation>
        <location evidence="1">Nucleus</location>
    </subcellularLocation>
</comment>
<comment type="domain">
    <text>The Q motif is unique to and characteristic of the DEAD box family of RNA helicases and controls ATP binding and hydrolysis.</text>
</comment>
<comment type="similarity">
    <text evidence="5">Belongs to the DEAD box helicase family. DDX23/PRP28 subfamily.</text>
</comment>
<gene>
    <name type="primary">prp28</name>
    <name type="ORF">AO090023000644</name>
</gene>